<keyword id="KW-0067">ATP-binding</keyword>
<keyword id="KW-0131">Cell cycle</keyword>
<keyword id="KW-0132">Cell division</keyword>
<keyword id="KW-0133">Cell shape</keyword>
<keyword id="KW-0961">Cell wall biogenesis/degradation</keyword>
<keyword id="KW-0963">Cytoplasm</keyword>
<keyword id="KW-0436">Ligase</keyword>
<keyword id="KW-0547">Nucleotide-binding</keyword>
<keyword id="KW-0573">Peptidoglycan synthesis</keyword>
<dbReference type="EC" id="6.3.2.8" evidence="1"/>
<dbReference type="EMBL" id="CP000848">
    <property type="protein sequence ID" value="ABV75944.1"/>
    <property type="molecule type" value="Genomic_DNA"/>
</dbReference>
<dbReference type="RefSeq" id="WP_012150546.1">
    <property type="nucleotide sequence ID" value="NZ_CP121767.1"/>
</dbReference>
<dbReference type="SMR" id="A8GRB9"/>
<dbReference type="GeneID" id="79937108"/>
<dbReference type="KEGG" id="rri:A1G_01900"/>
<dbReference type="HOGENOM" id="CLU_028104_2_2_5"/>
<dbReference type="UniPathway" id="UPA00219"/>
<dbReference type="Proteomes" id="UP000006832">
    <property type="component" value="Chromosome"/>
</dbReference>
<dbReference type="GO" id="GO:0005737">
    <property type="term" value="C:cytoplasm"/>
    <property type="evidence" value="ECO:0007669"/>
    <property type="project" value="UniProtKB-SubCell"/>
</dbReference>
<dbReference type="GO" id="GO:0005524">
    <property type="term" value="F:ATP binding"/>
    <property type="evidence" value="ECO:0007669"/>
    <property type="project" value="UniProtKB-UniRule"/>
</dbReference>
<dbReference type="GO" id="GO:0008763">
    <property type="term" value="F:UDP-N-acetylmuramate-L-alanine ligase activity"/>
    <property type="evidence" value="ECO:0007669"/>
    <property type="project" value="UniProtKB-UniRule"/>
</dbReference>
<dbReference type="GO" id="GO:0051301">
    <property type="term" value="P:cell division"/>
    <property type="evidence" value="ECO:0007669"/>
    <property type="project" value="UniProtKB-KW"/>
</dbReference>
<dbReference type="GO" id="GO:0071555">
    <property type="term" value="P:cell wall organization"/>
    <property type="evidence" value="ECO:0007669"/>
    <property type="project" value="UniProtKB-KW"/>
</dbReference>
<dbReference type="GO" id="GO:0009252">
    <property type="term" value="P:peptidoglycan biosynthetic process"/>
    <property type="evidence" value="ECO:0007669"/>
    <property type="project" value="UniProtKB-UniRule"/>
</dbReference>
<dbReference type="GO" id="GO:0008360">
    <property type="term" value="P:regulation of cell shape"/>
    <property type="evidence" value="ECO:0007669"/>
    <property type="project" value="UniProtKB-KW"/>
</dbReference>
<dbReference type="Gene3D" id="3.90.190.20">
    <property type="entry name" value="Mur ligase, C-terminal domain"/>
    <property type="match status" value="1"/>
</dbReference>
<dbReference type="Gene3D" id="3.40.1190.10">
    <property type="entry name" value="Mur-like, catalytic domain"/>
    <property type="match status" value="1"/>
</dbReference>
<dbReference type="Gene3D" id="3.40.50.720">
    <property type="entry name" value="NAD(P)-binding Rossmann-like Domain"/>
    <property type="match status" value="1"/>
</dbReference>
<dbReference type="HAMAP" id="MF_00046">
    <property type="entry name" value="MurC"/>
    <property type="match status" value="1"/>
</dbReference>
<dbReference type="InterPro" id="IPR036565">
    <property type="entry name" value="Mur-like_cat_sf"/>
</dbReference>
<dbReference type="InterPro" id="IPR004101">
    <property type="entry name" value="Mur_ligase_C"/>
</dbReference>
<dbReference type="InterPro" id="IPR036615">
    <property type="entry name" value="Mur_ligase_C_dom_sf"/>
</dbReference>
<dbReference type="InterPro" id="IPR013221">
    <property type="entry name" value="Mur_ligase_cen"/>
</dbReference>
<dbReference type="InterPro" id="IPR000713">
    <property type="entry name" value="Mur_ligase_N"/>
</dbReference>
<dbReference type="InterPro" id="IPR050061">
    <property type="entry name" value="MurCDEF_pg_biosynth"/>
</dbReference>
<dbReference type="InterPro" id="IPR005758">
    <property type="entry name" value="UDP-N-AcMur_Ala_ligase_MurC"/>
</dbReference>
<dbReference type="NCBIfam" id="TIGR01082">
    <property type="entry name" value="murC"/>
    <property type="match status" value="1"/>
</dbReference>
<dbReference type="PANTHER" id="PTHR43445:SF3">
    <property type="entry name" value="UDP-N-ACETYLMURAMATE--L-ALANINE LIGASE"/>
    <property type="match status" value="1"/>
</dbReference>
<dbReference type="PANTHER" id="PTHR43445">
    <property type="entry name" value="UDP-N-ACETYLMURAMATE--L-ALANINE LIGASE-RELATED"/>
    <property type="match status" value="1"/>
</dbReference>
<dbReference type="Pfam" id="PF01225">
    <property type="entry name" value="Mur_ligase"/>
    <property type="match status" value="1"/>
</dbReference>
<dbReference type="Pfam" id="PF02875">
    <property type="entry name" value="Mur_ligase_C"/>
    <property type="match status" value="1"/>
</dbReference>
<dbReference type="Pfam" id="PF08245">
    <property type="entry name" value="Mur_ligase_M"/>
    <property type="match status" value="1"/>
</dbReference>
<dbReference type="SUPFAM" id="SSF51984">
    <property type="entry name" value="MurCD N-terminal domain"/>
    <property type="match status" value="1"/>
</dbReference>
<dbReference type="SUPFAM" id="SSF53623">
    <property type="entry name" value="MurD-like peptide ligases, catalytic domain"/>
    <property type="match status" value="1"/>
</dbReference>
<dbReference type="SUPFAM" id="SSF53244">
    <property type="entry name" value="MurD-like peptide ligases, peptide-binding domain"/>
    <property type="match status" value="1"/>
</dbReference>
<evidence type="ECO:0000255" key="1">
    <source>
        <dbReference type="HAMAP-Rule" id="MF_00046"/>
    </source>
</evidence>
<proteinExistence type="inferred from homology"/>
<organism>
    <name type="scientific">Rickettsia rickettsii (strain Sheila Smith)</name>
    <dbReference type="NCBI Taxonomy" id="392021"/>
    <lineage>
        <taxon>Bacteria</taxon>
        <taxon>Pseudomonadati</taxon>
        <taxon>Pseudomonadota</taxon>
        <taxon>Alphaproteobacteria</taxon>
        <taxon>Rickettsiales</taxon>
        <taxon>Rickettsiaceae</taxon>
        <taxon>Rickettsieae</taxon>
        <taxon>Rickettsia</taxon>
        <taxon>spotted fever group</taxon>
    </lineage>
</organism>
<name>MURC_RICRS</name>
<gene>
    <name evidence="1" type="primary">murC</name>
    <name type="ordered locus">A1G_01900</name>
</gene>
<comment type="function">
    <text evidence="1">Cell wall formation.</text>
</comment>
<comment type="catalytic activity">
    <reaction evidence="1">
        <text>UDP-N-acetyl-alpha-D-muramate + L-alanine + ATP = UDP-N-acetyl-alpha-D-muramoyl-L-alanine + ADP + phosphate + H(+)</text>
        <dbReference type="Rhea" id="RHEA:23372"/>
        <dbReference type="ChEBI" id="CHEBI:15378"/>
        <dbReference type="ChEBI" id="CHEBI:30616"/>
        <dbReference type="ChEBI" id="CHEBI:43474"/>
        <dbReference type="ChEBI" id="CHEBI:57972"/>
        <dbReference type="ChEBI" id="CHEBI:70757"/>
        <dbReference type="ChEBI" id="CHEBI:83898"/>
        <dbReference type="ChEBI" id="CHEBI:456216"/>
        <dbReference type="EC" id="6.3.2.8"/>
    </reaction>
</comment>
<comment type="pathway">
    <text evidence="1">Cell wall biogenesis; peptidoglycan biosynthesis.</text>
</comment>
<comment type="subcellular location">
    <subcellularLocation>
        <location evidence="1">Cytoplasm</location>
    </subcellularLocation>
</comment>
<comment type="similarity">
    <text evidence="1">Belongs to the MurCDEF family.</text>
</comment>
<reference key="1">
    <citation type="submission" date="2007-09" db="EMBL/GenBank/DDBJ databases">
        <title>Complete genome sequence of Rickettsia rickettsii.</title>
        <authorList>
            <person name="Madan A."/>
            <person name="Fahey J."/>
            <person name="Helton E."/>
            <person name="Ketteman M."/>
            <person name="Madan A."/>
            <person name="Rodrigues S."/>
            <person name="Sanchez A."/>
            <person name="Dasch G."/>
            <person name="Eremeeva M."/>
        </authorList>
    </citation>
    <scope>NUCLEOTIDE SEQUENCE [LARGE SCALE GENOMIC DNA]</scope>
    <source>
        <strain>Sheila Smith</strain>
    </source>
</reference>
<feature type="chain" id="PRO_1000004399" description="UDP-N-acetylmuramate--L-alanine ligase">
    <location>
        <begin position="1"/>
        <end position="485"/>
    </location>
</feature>
<feature type="binding site" evidence="1">
    <location>
        <begin position="120"/>
        <end position="126"/>
    </location>
    <ligand>
        <name>ATP</name>
        <dbReference type="ChEBI" id="CHEBI:30616"/>
    </ligand>
</feature>
<protein>
    <recommendedName>
        <fullName evidence="1">UDP-N-acetylmuramate--L-alanine ligase</fullName>
        <ecNumber evidence="1">6.3.2.8</ecNumber>
    </recommendedName>
    <alternativeName>
        <fullName evidence="1">UDP-N-acetylmuramoyl-L-alanine synthetase</fullName>
    </alternativeName>
</protein>
<sequence length="485" mass="53310">MLLLELKKTNQTLETIHFIGIGGVGMSGIAEILYNLGYKVQGSDLVENYNTKRLESYGIKIFLGHAEQNITNVSYVVISSAINPKNPEIKEALERKIPIIRRADMLAELMRLKCSVAVSGSHGKTTTTSLVACLFEAAGLCPTVINGGIINNKSTNAYLGSSNYLIAEADESDATFIHIPSTIAIITNIDPEHLDYYRDFETLIGAFRSFITNLPFYGFAVCCIDHKIVRKLVDEITERKIVTYGIDSEDAHIIAFNINTDIASSTFDVKISLPNVLGTTIIEKITIPTPGRHNILNSLAAIAVGIELDFGIKAIKNGFNNFKGVKRRFTKVAEYNNASIIDDYAHHPEEIKATLATAKNIANKQNGKVIAIFQPHRYSRMQYLFDDFMLCFADADILYITDIYAAGENPIEGITGRSLVDKITKRKHHDKANFLAELDDAVGVIIDNAASGDMIIMMGAGNISSFANELDGRLSSRGFSCHTVV</sequence>
<accession>A8GRB9</accession>